<accession>Q7YR73</accession>
<comment type="function">
    <text evidence="1 2">Stimulatory receptor expressed in activated or antigen-experienced T-cells that plays an important role in the immune response. Upon binding to its ligand ICOSL expressed on antigen presenting cells (APCs), delivers costimulatory signals that enhances all basic T-cell responses to a foreign antigen, namely proliferation, secretion of lymphokines including IL10, up-regulation of molecules that mediate cell-cell interaction, and effective help for antibody secretion by B-cells. Also acts as a costimulatory receptor critical for the differentiation of T follicular regulatory cells upon immune challenges such as viral infection (By similarity). Mechanistically, potentiates TCR-induced calcium flux by augmenting PLCG1 activation and actin remodeling (By similarity). In addition, activates PI3K signaling pathways independently of calcium flux (By similarity). Essential both for efficient interaction between T and B-cells and for normal antibody responses to T-cell dependent antigens. Prevents the apoptosis of pre-activated T-cells. Plays a critical role in CD40-mediated class switching of immunoglobin isotypes (By similarity).</text>
</comment>
<comment type="subunit">
    <text evidence="2">Homodimer; disulfide-linked. Interacts with ICOSLG. Interacts with PIK3R1. Interacts with TBK1; this interaction is critical for the maturation of T follicular regulatory cells.</text>
</comment>
<comment type="subcellular location">
    <subcellularLocation>
        <location evidence="2">Cell membrane</location>
        <topology evidence="2">Single-pass type I membrane protein</topology>
    </subcellularLocation>
</comment>
<comment type="PTM">
    <text evidence="2">N-glycosylated.</text>
</comment>
<gene>
    <name type="primary">ICOS</name>
    <name type="synonym">AILIM</name>
</gene>
<evidence type="ECO:0000250" key="1">
    <source>
        <dbReference type="UniProtKB" id="Q9WVS0"/>
    </source>
</evidence>
<evidence type="ECO:0000250" key="2">
    <source>
        <dbReference type="UniProtKB" id="Q9Y6W8"/>
    </source>
</evidence>
<evidence type="ECO:0000255" key="3"/>
<protein>
    <recommendedName>
        <fullName>Inducible T-cell costimulator</fullName>
    </recommendedName>
    <alternativeName>
        <fullName>Activation-inducible lymphocyte immunomediatory molecule</fullName>
    </alternativeName>
    <cdAntigenName>CD278</cdAntigenName>
</protein>
<name>ICOS_CANLF</name>
<feature type="signal peptide" evidence="3">
    <location>
        <begin position="1"/>
        <end position="19"/>
    </location>
</feature>
<feature type="chain" id="PRO_0000014805" description="Inducible T-cell costimulator">
    <location>
        <begin position="20"/>
        <end position="208"/>
    </location>
</feature>
<feature type="topological domain" description="Extracellular" evidence="3">
    <location>
        <begin position="20"/>
        <end position="140"/>
    </location>
</feature>
<feature type="transmembrane region" description="Helical" evidence="3">
    <location>
        <begin position="141"/>
        <end position="161"/>
    </location>
</feature>
<feature type="topological domain" description="Cytoplasmic" evidence="3">
    <location>
        <begin position="162"/>
        <end position="208"/>
    </location>
</feature>
<feature type="domain" description="Ig-like V-type">
    <location>
        <begin position="30"/>
        <end position="132"/>
    </location>
</feature>
<feature type="glycosylation site" description="N-linked (GlcNAc...) asparagine" evidence="3">
    <location>
        <position position="23"/>
    </location>
</feature>
<feature type="glycosylation site" description="N-linked (GlcNAc...) asparagine" evidence="3">
    <location>
        <position position="122"/>
    </location>
</feature>
<feature type="disulfide bond" evidence="2">
    <location>
        <begin position="42"/>
        <end position="108"/>
    </location>
</feature>
<feature type="disulfide bond" evidence="2">
    <location>
        <begin position="63"/>
        <end position="82"/>
    </location>
</feature>
<proteinExistence type="evidence at transcript level"/>
<sequence>MKSDLWYFLLFCFQVEALTGEINDSTKSEMFTFHDGGVQILCKFNAIVSQYKMELLKGTEVLCDLTTTKENGNTVSKNPKFCQSQSSSDGVSFFLYNLDSSHASYYACQLSIFDPPPFQRKNISREYLNVYESQTCCQLKFWLPIGCAAFVVVYIFGCIFLCWLTKKKYRSSVHDPNSEYMFMAAVNTAKKPGLTGVTHNLELCGTQA</sequence>
<organism>
    <name type="scientific">Canis lupus familiaris</name>
    <name type="common">Dog</name>
    <name type="synonym">Canis familiaris</name>
    <dbReference type="NCBI Taxonomy" id="9615"/>
    <lineage>
        <taxon>Eukaryota</taxon>
        <taxon>Metazoa</taxon>
        <taxon>Chordata</taxon>
        <taxon>Craniata</taxon>
        <taxon>Vertebrata</taxon>
        <taxon>Euteleostomi</taxon>
        <taxon>Mammalia</taxon>
        <taxon>Eutheria</taxon>
        <taxon>Laurasiatheria</taxon>
        <taxon>Carnivora</taxon>
        <taxon>Caniformia</taxon>
        <taxon>Canidae</taxon>
        <taxon>Canis</taxon>
    </lineage>
</organism>
<keyword id="KW-1003">Cell membrane</keyword>
<keyword id="KW-1015">Disulfide bond</keyword>
<keyword id="KW-0325">Glycoprotein</keyword>
<keyword id="KW-0393">Immunoglobulin domain</keyword>
<keyword id="KW-0472">Membrane</keyword>
<keyword id="KW-1185">Reference proteome</keyword>
<keyword id="KW-0732">Signal</keyword>
<keyword id="KW-0812">Transmembrane</keyword>
<keyword id="KW-1133">Transmembrane helix</keyword>
<dbReference type="EMBL" id="AY342349">
    <property type="protein sequence ID" value="AAQ20845.1"/>
    <property type="molecule type" value="mRNA"/>
</dbReference>
<dbReference type="RefSeq" id="NP_001002972.1">
    <property type="nucleotide sequence ID" value="NM_001002972.2"/>
</dbReference>
<dbReference type="RefSeq" id="XP_038303217.1">
    <property type="nucleotide sequence ID" value="XM_038447289.1"/>
</dbReference>
<dbReference type="SMR" id="Q7YR73"/>
<dbReference type="FunCoup" id="Q7YR73">
    <property type="interactions" value="27"/>
</dbReference>
<dbReference type="STRING" id="9615.ENSCAFP00000018974"/>
<dbReference type="GlyCosmos" id="Q7YR73">
    <property type="glycosylation" value="2 sites, No reported glycans"/>
</dbReference>
<dbReference type="PaxDb" id="9612-ENSCAFP00000018974"/>
<dbReference type="Ensembl" id="ENSCAFT00000105814.1">
    <property type="protein sequence ID" value="ENSCAFP00000070678.1"/>
    <property type="gene ID" value="ENSCAFG00000012880.6"/>
</dbReference>
<dbReference type="Ensembl" id="ENSCAFT00030041709.1">
    <property type="protein sequence ID" value="ENSCAFP00030036390.1"/>
    <property type="gene ID" value="ENSCAFG00030022677.1"/>
</dbReference>
<dbReference type="Ensembl" id="ENSCAFT00040047502.1">
    <property type="protein sequence ID" value="ENSCAFP00040041463.1"/>
    <property type="gene ID" value="ENSCAFG00040025457.1"/>
</dbReference>
<dbReference type="Ensembl" id="ENSCAFT00845032572.1">
    <property type="protein sequence ID" value="ENSCAFP00845025476.1"/>
    <property type="gene ID" value="ENSCAFG00845018403.1"/>
</dbReference>
<dbReference type="GeneID" id="403456"/>
<dbReference type="KEGG" id="cfa:403456"/>
<dbReference type="CTD" id="29851"/>
<dbReference type="VEuPathDB" id="HostDB:ENSCAFG00845018403"/>
<dbReference type="VGNC" id="VGNC:41861">
    <property type="gene designation" value="ICOS"/>
</dbReference>
<dbReference type="eggNOG" id="ENOG502S59F">
    <property type="taxonomic scope" value="Eukaryota"/>
</dbReference>
<dbReference type="GeneTree" id="ENSGT00390000000801"/>
<dbReference type="HOGENOM" id="CLU_1315009_0_0_1"/>
<dbReference type="InParanoid" id="Q7YR73"/>
<dbReference type="OMA" id="QDKEDCF"/>
<dbReference type="OrthoDB" id="9403189at2759"/>
<dbReference type="TreeFam" id="TF335679"/>
<dbReference type="Reactome" id="R-CFA-1257604">
    <property type="pathway name" value="PIP3 activates AKT signaling"/>
</dbReference>
<dbReference type="Reactome" id="R-CFA-6811558">
    <property type="pathway name" value="PI5P, PP2A and IER3 Regulate PI3K/AKT Signaling"/>
</dbReference>
<dbReference type="Reactome" id="R-CFA-9927354">
    <property type="pathway name" value="Co-stimulation by ICOS"/>
</dbReference>
<dbReference type="Proteomes" id="UP000002254">
    <property type="component" value="Chromosome 37"/>
</dbReference>
<dbReference type="Proteomes" id="UP000694429">
    <property type="component" value="Chromosome 37"/>
</dbReference>
<dbReference type="Proteomes" id="UP000694542">
    <property type="component" value="Chromosome 37"/>
</dbReference>
<dbReference type="Proteomes" id="UP000805418">
    <property type="component" value="Chromosome 37"/>
</dbReference>
<dbReference type="Bgee" id="ENSCAFG00000012880">
    <property type="expression patterns" value="Expressed in blood and 33 other cell types or tissues"/>
</dbReference>
<dbReference type="GO" id="GO:0005886">
    <property type="term" value="C:plasma membrane"/>
    <property type="evidence" value="ECO:0007669"/>
    <property type="project" value="UniProtKB-SubCell"/>
</dbReference>
<dbReference type="GO" id="GO:0038023">
    <property type="term" value="F:signaling receptor activity"/>
    <property type="evidence" value="ECO:0007669"/>
    <property type="project" value="Ensembl"/>
</dbReference>
<dbReference type="GO" id="GO:0098609">
    <property type="term" value="P:cell-cell adhesion"/>
    <property type="evidence" value="ECO:0000318"/>
    <property type="project" value="GO_Central"/>
</dbReference>
<dbReference type="GO" id="GO:0031295">
    <property type="term" value="P:T cell costimulation"/>
    <property type="evidence" value="ECO:0000318"/>
    <property type="project" value="GO_Central"/>
</dbReference>
<dbReference type="GO" id="GO:0002517">
    <property type="term" value="P:T cell tolerance induction"/>
    <property type="evidence" value="ECO:0000318"/>
    <property type="project" value="GO_Central"/>
</dbReference>
<dbReference type="GO" id="GO:0061470">
    <property type="term" value="P:T follicular helper cell differentiation"/>
    <property type="evidence" value="ECO:0007669"/>
    <property type="project" value="Ensembl"/>
</dbReference>
<dbReference type="FunFam" id="2.60.40.10:FF:000874">
    <property type="entry name" value="Inducible T-cell costimulator"/>
    <property type="match status" value="1"/>
</dbReference>
<dbReference type="Gene3D" id="2.60.40.10">
    <property type="entry name" value="Immunoglobulins"/>
    <property type="match status" value="1"/>
</dbReference>
<dbReference type="InterPro" id="IPR039943">
    <property type="entry name" value="ICOS"/>
</dbReference>
<dbReference type="InterPro" id="IPR013783">
    <property type="entry name" value="Ig-like_fold"/>
</dbReference>
<dbReference type="InterPro" id="IPR013106">
    <property type="entry name" value="Ig_V-set"/>
</dbReference>
<dbReference type="PANTHER" id="PTHR20904:SF0">
    <property type="entry name" value="INDUCIBLE T-CELL COSTIMULATOR"/>
    <property type="match status" value="1"/>
</dbReference>
<dbReference type="PANTHER" id="PTHR20904">
    <property type="entry name" value="INDUCIBLE T-CELL COSTIMULATOR ICOS"/>
    <property type="match status" value="1"/>
</dbReference>
<dbReference type="Pfam" id="PF15910">
    <property type="entry name" value="V-set_2"/>
    <property type="match status" value="1"/>
</dbReference>
<reference key="1">
    <citation type="submission" date="2003-07" db="EMBL/GenBank/DDBJ databases">
        <title>Cloning and characterization of canine ICOS gene.</title>
        <authorList>
            <person name="Lee J.-H."/>
            <person name="Kuhr C."/>
            <person name="Storb R."/>
        </authorList>
    </citation>
    <scope>NUCLEOTIDE SEQUENCE [MRNA]</scope>
</reference>